<feature type="chain" id="PRO_0000117312" description="A-type ATP synthase subunit E">
    <location>
        <begin position="1"/>
        <end position="203"/>
    </location>
</feature>
<dbReference type="EMBL" id="U96487">
    <property type="protein sequence ID" value="AAB64413.1"/>
    <property type="molecule type" value="Genomic_DNA"/>
</dbReference>
<dbReference type="PIR" id="T44671">
    <property type="entry name" value="T44671"/>
</dbReference>
<dbReference type="SMR" id="O06501"/>
<dbReference type="GO" id="GO:0005886">
    <property type="term" value="C:plasma membrane"/>
    <property type="evidence" value="ECO:0007669"/>
    <property type="project" value="UniProtKB-SubCell"/>
</dbReference>
<dbReference type="GO" id="GO:0033178">
    <property type="term" value="C:proton-transporting two-sector ATPase complex, catalytic domain"/>
    <property type="evidence" value="ECO:0007669"/>
    <property type="project" value="InterPro"/>
</dbReference>
<dbReference type="GO" id="GO:0005524">
    <property type="term" value="F:ATP binding"/>
    <property type="evidence" value="ECO:0007669"/>
    <property type="project" value="UniProtKB-UniRule"/>
</dbReference>
<dbReference type="GO" id="GO:0046933">
    <property type="term" value="F:proton-transporting ATP synthase activity, rotational mechanism"/>
    <property type="evidence" value="ECO:0007669"/>
    <property type="project" value="UniProtKB-UniRule"/>
</dbReference>
<dbReference type="GO" id="GO:0046961">
    <property type="term" value="F:proton-transporting ATPase activity, rotational mechanism"/>
    <property type="evidence" value="ECO:0007669"/>
    <property type="project" value="InterPro"/>
</dbReference>
<dbReference type="GO" id="GO:0042777">
    <property type="term" value="P:proton motive force-driven plasma membrane ATP synthesis"/>
    <property type="evidence" value="ECO:0007669"/>
    <property type="project" value="UniProtKB-UniRule"/>
</dbReference>
<dbReference type="Gene3D" id="3.30.2320.30">
    <property type="entry name" value="ATP synthase, E subunit, C-terminal"/>
    <property type="match status" value="1"/>
</dbReference>
<dbReference type="Gene3D" id="1.20.5.620">
    <property type="entry name" value="F1F0 ATP synthase subunit B, membrane domain"/>
    <property type="match status" value="1"/>
</dbReference>
<dbReference type="HAMAP" id="MF_00311">
    <property type="entry name" value="ATP_synth_E_arch"/>
    <property type="match status" value="1"/>
</dbReference>
<dbReference type="InterPro" id="IPR028987">
    <property type="entry name" value="ATP_synth_B-like_membr_sf"/>
</dbReference>
<dbReference type="InterPro" id="IPR038495">
    <property type="entry name" value="ATPase_E_C"/>
</dbReference>
<dbReference type="InterPro" id="IPR002842">
    <property type="entry name" value="ATPase_V1_Esu"/>
</dbReference>
<dbReference type="NCBIfam" id="NF003049">
    <property type="entry name" value="PRK03963.1"/>
    <property type="match status" value="1"/>
</dbReference>
<dbReference type="PANTHER" id="PTHR45715">
    <property type="entry name" value="ATPASE H+-TRANSPORTING V1 SUBUNIT E1A-RELATED"/>
    <property type="match status" value="1"/>
</dbReference>
<dbReference type="Pfam" id="PF01991">
    <property type="entry name" value="vATP-synt_E"/>
    <property type="match status" value="1"/>
</dbReference>
<dbReference type="SUPFAM" id="SSF81573">
    <property type="entry name" value="F1F0 ATP synthase subunit B, membrane domain"/>
    <property type="match status" value="1"/>
</dbReference>
<dbReference type="SUPFAM" id="SSF160527">
    <property type="entry name" value="V-type ATPase subunit E-like"/>
    <property type="match status" value="1"/>
</dbReference>
<reference key="1">
    <citation type="journal article" date="1997" name="Biochem. Biophys. Res. Commun.">
        <title>The stabilizing residues and the functional domains in the hyperthermophilic V-ATPase of Desulfurococcus.</title>
        <authorList>
            <person name="Shibui H."/>
            <person name="Hamamoto T."/>
            <person name="Yohda M."/>
            <person name="Kagawa Y."/>
        </authorList>
    </citation>
    <scope>NUCLEOTIDE SEQUENCE [GENOMIC DNA]</scope>
    <source>
        <strain>SY</strain>
    </source>
</reference>
<evidence type="ECO:0000255" key="1">
    <source>
        <dbReference type="HAMAP-Rule" id="MF_00311"/>
    </source>
</evidence>
<evidence type="ECO:0000303" key="2">
    <source>
    </source>
</evidence>
<comment type="function">
    <text evidence="1">Component of the A-type ATP synthase that produces ATP from ADP in the presence of a proton gradient across the membrane.</text>
</comment>
<comment type="subunit">
    <text evidence="1">Has multiple subunits with at least A(3), B(3), C, D, E, F, H, I and proteolipid K(x).</text>
</comment>
<comment type="subcellular location">
    <subcellularLocation>
        <location evidence="1">Cell membrane</location>
        <topology evidence="1">Peripheral membrane protein</topology>
    </subcellularLocation>
</comment>
<comment type="similarity">
    <text evidence="1">Belongs to the V-ATPase E subunit family.</text>
</comment>
<keyword id="KW-0066">ATP synthesis</keyword>
<keyword id="KW-1003">Cell membrane</keyword>
<keyword id="KW-0375">Hydrogen ion transport</keyword>
<keyword id="KW-0406">Ion transport</keyword>
<keyword id="KW-0472">Membrane</keyword>
<keyword id="KW-0813">Transport</keyword>
<gene>
    <name evidence="1 2" type="primary">atpE</name>
</gene>
<accession>O06501</accession>
<name>AATE_DESSY</name>
<sequence length="203" mass="23218">MEGAELIIQEINREAEQKIQYILSEAKEEAEKLKEEARKRAEAKAEWILRKAKTQAEIEKQRIIANAKLEVRKKKLAVQEELIRSVIESLKERLANLPEDEYFPMLVELTVKAVEELGTDKVVVRSNERTLKLIVERLSEFREKLREALGKDVEVTVGEPIQTIGGILVESSDGTVRVDNTFDSRIERFESDLRATIAKALFG</sequence>
<organism>
    <name type="scientific">Desulfurococcus sp. (strain SY)</name>
    <dbReference type="NCBI Taxonomy" id="59822"/>
    <lineage>
        <taxon>Archaea</taxon>
        <taxon>Thermoproteota</taxon>
        <taxon>Thermoprotei</taxon>
        <taxon>Desulfurococcales</taxon>
        <taxon>Desulfurococcaceae</taxon>
        <taxon>Desulfurococcus</taxon>
    </lineage>
</organism>
<proteinExistence type="inferred from homology"/>
<protein>
    <recommendedName>
        <fullName evidence="1">A-type ATP synthase subunit E</fullName>
    </recommendedName>
    <alternativeName>
        <fullName evidence="2">V-ATPase subunit E</fullName>
    </alternativeName>
</protein>